<accession>B2ZDY1</accession>
<keyword id="KW-1032">Host cell membrane</keyword>
<keyword id="KW-1035">Host cytoplasm</keyword>
<keyword id="KW-1043">Host membrane</keyword>
<keyword id="KW-0945">Host-virus interaction</keyword>
<keyword id="KW-0449">Lipoprotein</keyword>
<keyword id="KW-0472">Membrane</keyword>
<keyword id="KW-0479">Metal-binding</keyword>
<keyword id="KW-0519">Myristate</keyword>
<keyword id="KW-1185">Reference proteome</keyword>
<keyword id="KW-1198">Viral budding</keyword>
<keyword id="KW-1187">Viral budding via the host ESCRT complexes</keyword>
<keyword id="KW-1188">Viral release from host cell</keyword>
<keyword id="KW-0946">Virion</keyword>
<keyword id="KW-0862">Zinc</keyword>
<keyword id="KW-0863">Zinc-finger</keyword>
<feature type="initiator methionine" description="Removed; by host" evidence="2">
    <location>
        <position position="1"/>
    </location>
</feature>
<feature type="chain" id="PRO_0000361042" description="RING finger protein Z" evidence="2">
    <location>
        <begin position="2"/>
        <end position="95"/>
    </location>
</feature>
<feature type="zinc finger region" description="RING-type; atypical" evidence="2">
    <location>
        <begin position="38"/>
        <end position="74"/>
    </location>
</feature>
<feature type="short sequence motif" description="PTAP/PSAP motif" evidence="2">
    <location>
        <begin position="88"/>
        <end position="91"/>
    </location>
</feature>
<feature type="lipid moiety-binding region" description="N-myristoyl glycine; by host" evidence="2">
    <location>
        <position position="2"/>
    </location>
</feature>
<reference key="1">
    <citation type="journal article" date="2008" name="Curr. Opin. Microbiol.">
        <title>Phylogeny of the genus Arenavirus.</title>
        <authorList>
            <person name="Charrel R.N."/>
            <person name="de Lamballerie X."/>
            <person name="Emonet S."/>
        </authorList>
    </citation>
    <scope>NUCLEOTIDE SEQUENCE [GENOMIC RNA]</scope>
</reference>
<organismHost>
    <name type="scientific">Neotoma</name>
    <name type="common">wood rats</name>
    <dbReference type="NCBI Taxonomy" id="42407"/>
</organismHost>
<gene>
    <name evidence="2" type="primary">Z</name>
</gene>
<comment type="function">
    <text evidence="1 2">Plays a crucial role in virion assembly and budding. Expressed late in the virus life cycle, it acts as an inhibitor of viral transcription and RNA synthesis by interacting with the viral polymerase L. Presumably recruits the NP encapsidated genome to cellular membranes at budding sites via direct interaction with NP. Plays critical roles in the final steps of viral release by interacting with host TSG101, a member of the vacuolar protein-sorting pathway and using other cellular host proteins involved in vesicle formation pathway. The budding of the virus progeny occurs after association of protein Z with the viral glycoprotein complex SSP-GP1-GP2 at the cell periphery, step that requires myristoylation of protein Z. Also selectively represses protein production by associating with host eIF4E (By similarity). In cell-based minigenome assay, has an inhibitory effect on the ribonucleoprotein machinery (vRNP), which is responsible for the replication and transcription of the viral genome (By similarity).</text>
</comment>
<comment type="subunit">
    <text evidence="2">Interacts with protein NP; this interaction probably directs the encapsidated genome to budding sites. Interacts (via RING domain) with polymerase L; this interaction inhibits viral transcription and replication, Z partially blocks the product exit tunnel for the releasing nascent RNA product. Interacts with the glycoprotein complex; this interaction plays a role in virion budding. Interacts with host eIF4E; this interaction results in eIF4E reduced affinity for its substrate, the 5'-m7 G cap structure. Interacts (via late-budding domain) with host TSG101; this interaction is essential for budding and release of viral particles. Interacts with host RPLP0; this interaction may serve to load ribosome-like particles inside the virion. Interacts with host PML; this interaction induces PML bodies redistribution in the cytoplasm upon viral infection.</text>
</comment>
<comment type="subcellular location">
    <subcellularLocation>
        <location evidence="2">Virion</location>
    </subcellularLocation>
    <subcellularLocation>
        <location evidence="2">Host cytoplasm</location>
        <location evidence="2">Host perinuclear region</location>
    </subcellularLocation>
    <subcellularLocation>
        <location evidence="2">Host cell membrane</location>
        <topology evidence="2">Lipid-anchor</topology>
        <orientation evidence="2">Cytoplasmic side</orientation>
    </subcellularLocation>
    <text evidence="2">Mainly perinuclear. During budding, associates at the inner side of the plasma membrane of infected cells.</text>
</comment>
<comment type="domain">
    <text evidence="2">Late-budding domains (L domains) are short sequence motifs essential for viral particle budding. They recruit proteins of the host ESCRT machinery (Endosomal Sorting Complex Required for Transport) or ESCRT-associated proteins.</text>
</comment>
<comment type="PTM">
    <text evidence="1">Myristoylation is required for the role of RING finger protein Z in assembly and budding.</text>
</comment>
<comment type="similarity">
    <text>Belongs to the arenaviridae Z protein family.</text>
</comment>
<sequence>MGLRYSKDVKDRYGDREPEGRIPITLNMPQSLYGRYNCKSCWFANKGLLKCSNHYLCLKCLTLMLRRSDYCGICGEVLPKKLVFENSPSAPPYEA</sequence>
<dbReference type="EMBL" id="EU646186">
    <property type="protein sequence ID" value="ACD03599.1"/>
    <property type="molecule type" value="Genomic_RNA"/>
</dbReference>
<dbReference type="SMR" id="B2ZDY1"/>
<dbReference type="Proteomes" id="UP000009268">
    <property type="component" value="Genome"/>
</dbReference>
<dbReference type="GO" id="GO:0044220">
    <property type="term" value="C:host cell perinuclear region of cytoplasm"/>
    <property type="evidence" value="ECO:0007669"/>
    <property type="project" value="UniProtKB-SubCell"/>
</dbReference>
<dbReference type="GO" id="GO:0020002">
    <property type="term" value="C:host cell plasma membrane"/>
    <property type="evidence" value="ECO:0007669"/>
    <property type="project" value="UniProtKB-SubCell"/>
</dbReference>
<dbReference type="GO" id="GO:0016020">
    <property type="term" value="C:membrane"/>
    <property type="evidence" value="ECO:0007669"/>
    <property type="project" value="UniProtKB-UniRule"/>
</dbReference>
<dbReference type="GO" id="GO:0044423">
    <property type="term" value="C:virion component"/>
    <property type="evidence" value="ECO:0007669"/>
    <property type="project" value="UniProtKB-UniRule"/>
</dbReference>
<dbReference type="GO" id="GO:0003723">
    <property type="term" value="F:RNA binding"/>
    <property type="evidence" value="ECO:0007669"/>
    <property type="project" value="UniProtKB-UniRule"/>
</dbReference>
<dbReference type="GO" id="GO:0008270">
    <property type="term" value="F:zinc ion binding"/>
    <property type="evidence" value="ECO:0007669"/>
    <property type="project" value="UniProtKB-UniRule"/>
</dbReference>
<dbReference type="GO" id="GO:0046761">
    <property type="term" value="P:viral budding from plasma membrane"/>
    <property type="evidence" value="ECO:0007669"/>
    <property type="project" value="UniProtKB-UniRule"/>
</dbReference>
<dbReference type="GO" id="GO:0039702">
    <property type="term" value="P:viral budding via host ESCRT complex"/>
    <property type="evidence" value="ECO:0007669"/>
    <property type="project" value="UniProtKB-UniRule"/>
</dbReference>
<dbReference type="Gene3D" id="3.30.160.310">
    <property type="match status" value="1"/>
</dbReference>
<dbReference type="HAMAP" id="MF_04087">
    <property type="entry name" value="ARENA_Z"/>
    <property type="match status" value="1"/>
</dbReference>
<dbReference type="InterPro" id="IPR024183">
    <property type="entry name" value="RING_finger_Z_arenaviridae"/>
</dbReference>
<dbReference type="InterPro" id="IPR038485">
    <property type="entry name" value="Z_RING-type_Znf_sf"/>
</dbReference>
<dbReference type="InterPro" id="IPR003224">
    <property type="entry name" value="Z_RING_Znf"/>
</dbReference>
<dbReference type="Pfam" id="PF03854">
    <property type="entry name" value="zf-P11"/>
    <property type="match status" value="1"/>
</dbReference>
<dbReference type="PIRSF" id="PIRSF004030">
    <property type="entry name" value="Z_ArenaV"/>
    <property type="match status" value="1"/>
</dbReference>
<dbReference type="SUPFAM" id="SSF57850">
    <property type="entry name" value="RING/U-box"/>
    <property type="match status" value="1"/>
</dbReference>
<evidence type="ECO:0000250" key="1">
    <source>
        <dbReference type="UniProtKB" id="P18541"/>
    </source>
</evidence>
<evidence type="ECO:0000255" key="2">
    <source>
        <dbReference type="HAMAP-Rule" id="MF_04087"/>
    </source>
</evidence>
<organism>
    <name type="scientific">Whitewater Arroyo mammarenavirus (isolate Rat/United States/AV 9310135/1995)</name>
    <name type="common">WWAV</name>
    <dbReference type="NCBI Taxonomy" id="3052331"/>
    <lineage>
        <taxon>Viruses</taxon>
        <taxon>Riboviria</taxon>
        <taxon>Orthornavirae</taxon>
        <taxon>Negarnaviricota</taxon>
        <taxon>Polyploviricotina</taxon>
        <taxon>Ellioviricetes</taxon>
        <taxon>Bunyavirales</taxon>
        <taxon>Arenaviridae</taxon>
        <taxon>Mammarenavirus</taxon>
    </lineage>
</organism>
<name>Z_WWAVU</name>
<protein>
    <recommendedName>
        <fullName evidence="2">RING finger protein Z</fullName>
        <shortName evidence="2">Protein Z</shortName>
    </recommendedName>
    <alternativeName>
        <fullName evidence="2">Zinc-binding protein</fullName>
    </alternativeName>
</protein>
<proteinExistence type="inferred from homology"/>